<feature type="chain" id="PRO_0000081442" description="Two-component response regulator-like PRR1">
    <location>
        <begin position="1"/>
        <end position="518"/>
    </location>
</feature>
<feature type="domain" description="Response regulatory" evidence="2">
    <location>
        <begin position="29"/>
        <end position="147"/>
    </location>
</feature>
<feature type="domain" description="CCT" evidence="3">
    <location>
        <begin position="443"/>
        <end position="485"/>
    </location>
</feature>
<feature type="region of interest" description="Disordered" evidence="4">
    <location>
        <begin position="172"/>
        <end position="241"/>
    </location>
</feature>
<feature type="region of interest" description="Disordered" evidence="4">
    <location>
        <begin position="266"/>
        <end position="305"/>
    </location>
</feature>
<feature type="region of interest" description="Disordered" evidence="4">
    <location>
        <begin position="483"/>
        <end position="518"/>
    </location>
</feature>
<feature type="compositionally biased region" description="Polar residues" evidence="4">
    <location>
        <begin position="196"/>
        <end position="212"/>
    </location>
</feature>
<feature type="sequence conflict" description="In Ref. 1; BAD38854." evidence="9" ref="1">
    <original>G</original>
    <variation>E</variation>
    <location>
        <position position="18"/>
    </location>
</feature>
<name>PRR1_ORYSJ</name>
<keyword id="KW-0090">Biological rhythms</keyword>
<keyword id="KW-0539">Nucleus</keyword>
<keyword id="KW-1185">Reference proteome</keyword>
<keyword id="KW-0804">Transcription</keyword>
<keyword id="KW-0805">Transcription regulation</keyword>
<keyword id="KW-0902">Two-component regulatory system</keyword>
<protein>
    <recommendedName>
        <fullName>Two-component response regulator-like PRR1</fullName>
    </recommendedName>
    <alternativeName>
        <fullName>Pseudo-response regulator 1</fullName>
        <shortName>OsPRR1</shortName>
    </alternativeName>
</protein>
<comment type="function">
    <text evidence="1">Controls photoperiodic flowering response. Seems to be one of the component of the circadian clock. Expression of several members of the ARR-like family is controlled by circadian rhythm. The particular coordinated sequential expression of PRR73, PRR37, PRR95, PRR59 and PPR1 result to circadian waves that may be at the basis of the endogenous circadian clock (By similarity).</text>
</comment>
<comment type="subunit">
    <text evidence="7 8">Interacts with PIL13 (PubMed:17485859, PubMed:21549224). Interacts with PIL15 (PubMed:21549224).</text>
</comment>
<comment type="subcellular location">
    <subcellularLocation>
        <location evidence="3 8">Nucleus</location>
    </subcellularLocation>
</comment>
<comment type="induction">
    <text evidence="5 6">Expressed with a circadian rhythm showing a broad peak in the late day.</text>
</comment>
<comment type="similarity">
    <text evidence="9">Belongs to the ARR-like family.</text>
</comment>
<comment type="caution">
    <text evidence="9">Lacks the phospho-accepting Asp (here Glu-80), present in the receiver domain, which is one of the conserved features of the two-component response regulators (ARRs) family.</text>
</comment>
<dbReference type="EMBL" id="AB189038">
    <property type="protein sequence ID" value="BAD38854.1"/>
    <property type="molecule type" value="mRNA"/>
</dbReference>
<dbReference type="EMBL" id="AP003980">
    <property type="protein sequence ID" value="BAD21456.1"/>
    <property type="molecule type" value="Genomic_DNA"/>
</dbReference>
<dbReference type="EMBL" id="AP004083">
    <property type="protein sequence ID" value="BAD21598.1"/>
    <property type="molecule type" value="Genomic_DNA"/>
</dbReference>
<dbReference type="EMBL" id="AP008208">
    <property type="protein sequence ID" value="BAF09362.1"/>
    <property type="molecule type" value="Genomic_DNA"/>
</dbReference>
<dbReference type="EMBL" id="AP014958">
    <property type="protein sequence ID" value="BAS79797.1"/>
    <property type="molecule type" value="Genomic_DNA"/>
</dbReference>
<dbReference type="EMBL" id="CM000139">
    <property type="protein sequence ID" value="EEE57385.1"/>
    <property type="molecule type" value="Genomic_DNA"/>
</dbReference>
<dbReference type="RefSeq" id="XP_015626003.1">
    <property type="nucleotide sequence ID" value="XM_015770517.1"/>
</dbReference>
<dbReference type="SMR" id="Q689G9"/>
<dbReference type="FunCoup" id="Q689G9">
    <property type="interactions" value="762"/>
</dbReference>
<dbReference type="IntAct" id="Q689G9">
    <property type="interactions" value="2"/>
</dbReference>
<dbReference type="STRING" id="39947.Q689G9"/>
<dbReference type="PaxDb" id="39947-Q689G9"/>
<dbReference type="EnsemblPlants" id="Os02t0618200-01">
    <property type="protein sequence ID" value="Os02t0618200-01"/>
    <property type="gene ID" value="Os02g0618200"/>
</dbReference>
<dbReference type="Gramene" id="Os02t0618200-01">
    <property type="protein sequence ID" value="Os02t0618200-01"/>
    <property type="gene ID" value="Os02g0618200"/>
</dbReference>
<dbReference type="KEGG" id="dosa:Os02g0618200"/>
<dbReference type="eggNOG" id="KOG1601">
    <property type="taxonomic scope" value="Eukaryota"/>
</dbReference>
<dbReference type="HOGENOM" id="CLU_041215_0_0_1"/>
<dbReference type="InParanoid" id="Q689G9"/>
<dbReference type="OMA" id="NQHEYES"/>
<dbReference type="OrthoDB" id="60033at2759"/>
<dbReference type="PlantReactome" id="R-OSA-8933811">
    <property type="pathway name" value="Circadian rhythm"/>
</dbReference>
<dbReference type="Proteomes" id="UP000000763">
    <property type="component" value="Chromosome 2"/>
</dbReference>
<dbReference type="Proteomes" id="UP000007752">
    <property type="component" value="Chromosome 2"/>
</dbReference>
<dbReference type="Proteomes" id="UP000059680">
    <property type="component" value="Chromosome 2"/>
</dbReference>
<dbReference type="GO" id="GO:0005634">
    <property type="term" value="C:nucleus"/>
    <property type="evidence" value="ECO:0000314"/>
    <property type="project" value="UniProtKB"/>
</dbReference>
<dbReference type="GO" id="GO:0009736">
    <property type="term" value="P:cytokinin-activated signaling pathway"/>
    <property type="evidence" value="ECO:0007669"/>
    <property type="project" value="InterPro"/>
</dbReference>
<dbReference type="GO" id="GO:0000160">
    <property type="term" value="P:phosphorelay signal transduction system"/>
    <property type="evidence" value="ECO:0007669"/>
    <property type="project" value="UniProtKB-KW"/>
</dbReference>
<dbReference type="GO" id="GO:0048511">
    <property type="term" value="P:rhythmic process"/>
    <property type="evidence" value="ECO:0007669"/>
    <property type="project" value="UniProtKB-KW"/>
</dbReference>
<dbReference type="CDD" id="cd17582">
    <property type="entry name" value="psREC_PRR"/>
    <property type="match status" value="1"/>
</dbReference>
<dbReference type="FunFam" id="3.40.50.2300:FF:000316">
    <property type="entry name" value="Two-component response regulator-like APRR1"/>
    <property type="match status" value="1"/>
</dbReference>
<dbReference type="Gene3D" id="3.40.50.2300">
    <property type="match status" value="1"/>
</dbReference>
<dbReference type="InterPro" id="IPR045279">
    <property type="entry name" value="ARR-like"/>
</dbReference>
<dbReference type="InterPro" id="IPR010402">
    <property type="entry name" value="CCT_domain"/>
</dbReference>
<dbReference type="InterPro" id="IPR011006">
    <property type="entry name" value="CheY-like_superfamily"/>
</dbReference>
<dbReference type="InterPro" id="IPR001789">
    <property type="entry name" value="Sig_transdc_resp-reg_receiver"/>
</dbReference>
<dbReference type="PANTHER" id="PTHR43874">
    <property type="entry name" value="TWO-COMPONENT RESPONSE REGULATOR"/>
    <property type="match status" value="1"/>
</dbReference>
<dbReference type="PANTHER" id="PTHR43874:SF1">
    <property type="entry name" value="TWO-COMPONENT RESPONSE REGULATOR-LIKE APRR1"/>
    <property type="match status" value="1"/>
</dbReference>
<dbReference type="Pfam" id="PF06203">
    <property type="entry name" value="CCT"/>
    <property type="match status" value="1"/>
</dbReference>
<dbReference type="Pfam" id="PF00072">
    <property type="entry name" value="Response_reg"/>
    <property type="match status" value="1"/>
</dbReference>
<dbReference type="SMART" id="SM00448">
    <property type="entry name" value="REC"/>
    <property type="match status" value="1"/>
</dbReference>
<dbReference type="SUPFAM" id="SSF52172">
    <property type="entry name" value="CheY-like"/>
    <property type="match status" value="1"/>
</dbReference>
<dbReference type="PROSITE" id="PS51017">
    <property type="entry name" value="CCT"/>
    <property type="match status" value="1"/>
</dbReference>
<dbReference type="PROSITE" id="PS50110">
    <property type="entry name" value="RESPONSE_REGULATORY"/>
    <property type="match status" value="1"/>
</dbReference>
<proteinExistence type="evidence at protein level"/>
<gene>
    <name type="primary">PRR1</name>
    <name evidence="10" type="ordered locus">Os02g0618200</name>
    <name evidence="9" type="ordered locus">LOC_Os02g40510</name>
    <name type="ORF">OJ1014_H03.23</name>
    <name type="ORF">OJ1212_C01.9</name>
    <name evidence="11" type="ORF">OsJ_07546</name>
</gene>
<reference key="1">
    <citation type="journal article" date="2003" name="Plant Cell Physiol.">
        <title>The evolutionarily conserved OsPRR quintet: rice pseudo-response regulators implicated in circadian rhythm.</title>
        <authorList>
            <person name="Murakami M."/>
            <person name="Ashikari M."/>
            <person name="Miura K."/>
            <person name="Yamashino T."/>
            <person name="Mizuno T."/>
        </authorList>
    </citation>
    <scope>NUCLEOTIDE SEQUENCE [MRNA]</scope>
    <scope>INDUCTION</scope>
    <source>
        <strain>cv. Nipponbare</strain>
    </source>
</reference>
<reference key="2">
    <citation type="journal article" date="2005" name="Nature">
        <title>The map-based sequence of the rice genome.</title>
        <authorList>
            <consortium name="International rice genome sequencing project (IRGSP)"/>
        </authorList>
    </citation>
    <scope>NUCLEOTIDE SEQUENCE [LARGE SCALE GENOMIC DNA]</scope>
    <source>
        <strain>cv. Nipponbare</strain>
    </source>
</reference>
<reference key="3">
    <citation type="journal article" date="2008" name="Nucleic Acids Res.">
        <title>The rice annotation project database (RAP-DB): 2008 update.</title>
        <authorList>
            <consortium name="The rice annotation project (RAP)"/>
        </authorList>
    </citation>
    <scope>GENOME REANNOTATION</scope>
    <source>
        <strain>cv. Nipponbare</strain>
    </source>
</reference>
<reference key="4">
    <citation type="journal article" date="2013" name="Rice">
        <title>Improvement of the Oryza sativa Nipponbare reference genome using next generation sequence and optical map data.</title>
        <authorList>
            <person name="Kawahara Y."/>
            <person name="de la Bastide M."/>
            <person name="Hamilton J.P."/>
            <person name="Kanamori H."/>
            <person name="McCombie W.R."/>
            <person name="Ouyang S."/>
            <person name="Schwartz D.C."/>
            <person name="Tanaka T."/>
            <person name="Wu J."/>
            <person name="Zhou S."/>
            <person name="Childs K.L."/>
            <person name="Davidson R.M."/>
            <person name="Lin H."/>
            <person name="Quesada-Ocampo L."/>
            <person name="Vaillancourt B."/>
            <person name="Sakai H."/>
            <person name="Lee S.S."/>
            <person name="Kim J."/>
            <person name="Numa H."/>
            <person name="Itoh T."/>
            <person name="Buell C.R."/>
            <person name="Matsumoto T."/>
        </authorList>
    </citation>
    <scope>GENOME REANNOTATION</scope>
    <source>
        <strain>cv. Nipponbare</strain>
    </source>
</reference>
<reference key="5">
    <citation type="journal article" date="2005" name="PLoS Biol.">
        <title>The genomes of Oryza sativa: a history of duplications.</title>
        <authorList>
            <person name="Yu J."/>
            <person name="Wang J."/>
            <person name="Lin W."/>
            <person name="Li S."/>
            <person name="Li H."/>
            <person name="Zhou J."/>
            <person name="Ni P."/>
            <person name="Dong W."/>
            <person name="Hu S."/>
            <person name="Zeng C."/>
            <person name="Zhang J."/>
            <person name="Zhang Y."/>
            <person name="Li R."/>
            <person name="Xu Z."/>
            <person name="Li S."/>
            <person name="Li X."/>
            <person name="Zheng H."/>
            <person name="Cong L."/>
            <person name="Lin L."/>
            <person name="Yin J."/>
            <person name="Geng J."/>
            <person name="Li G."/>
            <person name="Shi J."/>
            <person name="Liu J."/>
            <person name="Lv H."/>
            <person name="Li J."/>
            <person name="Wang J."/>
            <person name="Deng Y."/>
            <person name="Ran L."/>
            <person name="Shi X."/>
            <person name="Wang X."/>
            <person name="Wu Q."/>
            <person name="Li C."/>
            <person name="Ren X."/>
            <person name="Wang J."/>
            <person name="Wang X."/>
            <person name="Li D."/>
            <person name="Liu D."/>
            <person name="Zhang X."/>
            <person name="Ji Z."/>
            <person name="Zhao W."/>
            <person name="Sun Y."/>
            <person name="Zhang Z."/>
            <person name="Bao J."/>
            <person name="Han Y."/>
            <person name="Dong L."/>
            <person name="Ji J."/>
            <person name="Chen P."/>
            <person name="Wu S."/>
            <person name="Liu J."/>
            <person name="Xiao Y."/>
            <person name="Bu D."/>
            <person name="Tan J."/>
            <person name="Yang L."/>
            <person name="Ye C."/>
            <person name="Zhang J."/>
            <person name="Xu J."/>
            <person name="Zhou Y."/>
            <person name="Yu Y."/>
            <person name="Zhang B."/>
            <person name="Zhuang S."/>
            <person name="Wei H."/>
            <person name="Liu B."/>
            <person name="Lei M."/>
            <person name="Yu H."/>
            <person name="Li Y."/>
            <person name="Xu H."/>
            <person name="Wei S."/>
            <person name="He X."/>
            <person name="Fang L."/>
            <person name="Zhang Z."/>
            <person name="Zhang Y."/>
            <person name="Huang X."/>
            <person name="Su Z."/>
            <person name="Tong W."/>
            <person name="Li J."/>
            <person name="Tong Z."/>
            <person name="Li S."/>
            <person name="Ye J."/>
            <person name="Wang L."/>
            <person name="Fang L."/>
            <person name="Lei T."/>
            <person name="Chen C.-S."/>
            <person name="Chen H.-C."/>
            <person name="Xu Z."/>
            <person name="Li H."/>
            <person name="Huang H."/>
            <person name="Zhang F."/>
            <person name="Xu H."/>
            <person name="Li N."/>
            <person name="Zhao C."/>
            <person name="Li S."/>
            <person name="Dong L."/>
            <person name="Huang Y."/>
            <person name="Li L."/>
            <person name="Xi Y."/>
            <person name="Qi Q."/>
            <person name="Li W."/>
            <person name="Zhang B."/>
            <person name="Hu W."/>
            <person name="Zhang Y."/>
            <person name="Tian X."/>
            <person name="Jiao Y."/>
            <person name="Liang X."/>
            <person name="Jin J."/>
            <person name="Gao L."/>
            <person name="Zheng W."/>
            <person name="Hao B."/>
            <person name="Liu S.-M."/>
            <person name="Wang W."/>
            <person name="Yuan L."/>
            <person name="Cao M."/>
            <person name="McDermott J."/>
            <person name="Samudrala R."/>
            <person name="Wang J."/>
            <person name="Wong G.K.-S."/>
            <person name="Yang H."/>
        </authorList>
    </citation>
    <scope>NUCLEOTIDE SEQUENCE [LARGE SCALE GENOMIC DNA]</scope>
    <source>
        <strain>cv. Nipponbare</strain>
    </source>
</reference>
<reference key="6">
    <citation type="journal article" date="2005" name="Biosci. Biotechnol. Biochem.">
        <title>Circadian-associated rice pseudo response regulators (OsPRRs): insight into the control of flowering time.</title>
        <authorList>
            <person name="Murakami M."/>
            <person name="Matsushika A."/>
            <person name="Ashikari M."/>
            <person name="Yamashino T."/>
            <person name="Mizuno T."/>
        </authorList>
    </citation>
    <scope>INDUCTION</scope>
</reference>
<reference key="7">
    <citation type="journal article" date="2007" name="Biosci. Biotechnol. Biochem.">
        <title>Characterization of a set of phytochrome-interacting factor-like bHLH proteins in Oryza sativa.</title>
        <authorList>
            <person name="Nakamura Y."/>
            <person name="Kato T."/>
            <person name="Yamashino T."/>
            <person name="Murakami M."/>
            <person name="Mizuno T."/>
        </authorList>
    </citation>
    <scope>INTERACTION WITH PIL13</scope>
</reference>
<reference key="8">
    <citation type="journal article" date="2011" name="New Biotechnol.">
        <title>An atypical HLH protein OsLF in rice regulates flowering time and interacts with OsPIL13 and OsPIL15.</title>
        <authorList>
            <person name="Zhao X.L."/>
            <person name="Shi Z.Y."/>
            <person name="Peng L.T."/>
            <person name="Shen G.Z."/>
            <person name="Zhang J.L."/>
        </authorList>
    </citation>
    <scope>INTERACTION WITH PIL13 AND PIL15</scope>
    <scope>SUBCELLULAR LOCATION</scope>
    <source>
        <strain>cv. Zhonghua 11</strain>
    </source>
</reference>
<evidence type="ECO:0000250" key="1"/>
<evidence type="ECO:0000255" key="2">
    <source>
        <dbReference type="PROSITE-ProRule" id="PRU00169"/>
    </source>
</evidence>
<evidence type="ECO:0000255" key="3">
    <source>
        <dbReference type="PROSITE-ProRule" id="PRU00357"/>
    </source>
</evidence>
<evidence type="ECO:0000256" key="4">
    <source>
        <dbReference type="SAM" id="MobiDB-lite"/>
    </source>
</evidence>
<evidence type="ECO:0000269" key="5">
    <source>
    </source>
</evidence>
<evidence type="ECO:0000269" key="6">
    <source>
    </source>
</evidence>
<evidence type="ECO:0000269" key="7">
    <source>
    </source>
</evidence>
<evidence type="ECO:0000269" key="8">
    <source>
    </source>
</evidence>
<evidence type="ECO:0000305" key="9"/>
<evidence type="ECO:0000312" key="10">
    <source>
        <dbReference type="EMBL" id="BAF09362.1"/>
    </source>
</evidence>
<evidence type="ECO:0000312" key="11">
    <source>
        <dbReference type="EMBL" id="EEE57385.1"/>
    </source>
</evidence>
<organism>
    <name type="scientific">Oryza sativa subsp. japonica</name>
    <name type="common">Rice</name>
    <dbReference type="NCBI Taxonomy" id="39947"/>
    <lineage>
        <taxon>Eukaryota</taxon>
        <taxon>Viridiplantae</taxon>
        <taxon>Streptophyta</taxon>
        <taxon>Embryophyta</taxon>
        <taxon>Tracheophyta</taxon>
        <taxon>Spermatophyta</taxon>
        <taxon>Magnoliopsida</taxon>
        <taxon>Liliopsida</taxon>
        <taxon>Poales</taxon>
        <taxon>Poaceae</taxon>
        <taxon>BOP clade</taxon>
        <taxon>Oryzoideae</taxon>
        <taxon>Oryzeae</taxon>
        <taxon>Oryzinae</taxon>
        <taxon>Oryza</taxon>
        <taxon>Oryza sativa</taxon>
    </lineage>
</organism>
<accession>Q689G9</accession>
<accession>A0A0P0VLS5</accession>
<accession>Q0DZH6</accession>
<accession>Q6K951</accession>
<sequence length="518" mass="57878">MVGAGEGDRVGGGAAVGGGQQFVDRSKVRILLCDSDPSSSREVLRLLCNCSYQVTCAKSPRQVINVLNCEAGEIDIILAEVDLPVSKCFKMLKYIARNKELRHIPIIMMSNRDEVSVVVKCLRLGAAEYLVKPLRMNELLNLWTHVWRRRRMLGLSEKNFFNDNFELALSEPSDANTNSTTLLSDDTDDKPKENINQETSTSNQHEYESNPSDAEPKQKGTPEGLLVSTEGGDQASSPGVMFSRPIKTNLRVAESSAFLAYVKSSTPTTSSFDSELQKGGNRLDSSDHRGNFSSTTDRSDTGTDVNIRDKEAFEMPVQYPVVCFSSSNLHLERSNEGQNDASGTPPVYHFPFYYPGMMDHGMTHPPVQNFQGNINNAQVHTPQTLLPQYNVYPQCHGVSMMPPFQYNPAGMSIQSNQLPTQNMWPQASSTPMPEETCSRSERRAAALAKFRLKRKERCFDKKVRYVNRKKLAETRPRVRGQFVRQANYTDITSTGDDISEDEDDDPSSREVEMVSSPE</sequence>